<reference key="1">
    <citation type="journal article" date="2008" name="BMC Genomics">
        <title>The missing link: Bordetella petrii is endowed with both the metabolic versatility of environmental bacteria and virulence traits of pathogenic Bordetellae.</title>
        <authorList>
            <person name="Gross R."/>
            <person name="Guzman C.A."/>
            <person name="Sebaihia M."/>
            <person name="Martin dos Santos V.A.P."/>
            <person name="Pieper D.H."/>
            <person name="Koebnik R."/>
            <person name="Lechner M."/>
            <person name="Bartels D."/>
            <person name="Buhrmester J."/>
            <person name="Choudhuri J.V."/>
            <person name="Ebensen T."/>
            <person name="Gaigalat L."/>
            <person name="Herrmann S."/>
            <person name="Khachane A.N."/>
            <person name="Larisch C."/>
            <person name="Link S."/>
            <person name="Linke B."/>
            <person name="Meyer F."/>
            <person name="Mormann S."/>
            <person name="Nakunst D."/>
            <person name="Rueckert C."/>
            <person name="Schneiker-Bekel S."/>
            <person name="Schulze K."/>
            <person name="Voerholter F.-J."/>
            <person name="Yevsa T."/>
            <person name="Engle J.T."/>
            <person name="Goldman W.E."/>
            <person name="Puehler A."/>
            <person name="Goebel U.B."/>
            <person name="Goesmann A."/>
            <person name="Bloecker H."/>
            <person name="Kaiser O."/>
            <person name="Martinez-Arias R."/>
        </authorList>
    </citation>
    <scope>NUCLEOTIDE SEQUENCE [LARGE SCALE GENOMIC DNA]</scope>
    <source>
        <strain>ATCC BAA-461 / DSM 12804 / CCUG 43448</strain>
    </source>
</reference>
<evidence type="ECO:0000255" key="1">
    <source>
        <dbReference type="HAMAP-Rule" id="MF_01445"/>
    </source>
</evidence>
<dbReference type="EC" id="2.3.1.234" evidence="1"/>
<dbReference type="EMBL" id="AM902716">
    <property type="protein sequence ID" value="CAP42893.1"/>
    <property type="molecule type" value="Genomic_DNA"/>
</dbReference>
<dbReference type="SMR" id="A9IP11"/>
<dbReference type="STRING" id="94624.Bpet2551"/>
<dbReference type="KEGG" id="bpt:Bpet2551"/>
<dbReference type="eggNOG" id="COG0533">
    <property type="taxonomic scope" value="Bacteria"/>
</dbReference>
<dbReference type="Proteomes" id="UP000001225">
    <property type="component" value="Chromosome"/>
</dbReference>
<dbReference type="GO" id="GO:0005737">
    <property type="term" value="C:cytoplasm"/>
    <property type="evidence" value="ECO:0007669"/>
    <property type="project" value="UniProtKB-SubCell"/>
</dbReference>
<dbReference type="GO" id="GO:0005506">
    <property type="term" value="F:iron ion binding"/>
    <property type="evidence" value="ECO:0007669"/>
    <property type="project" value="UniProtKB-UniRule"/>
</dbReference>
<dbReference type="GO" id="GO:0061711">
    <property type="term" value="F:N(6)-L-threonylcarbamoyladenine synthase activity"/>
    <property type="evidence" value="ECO:0007669"/>
    <property type="project" value="UniProtKB-EC"/>
</dbReference>
<dbReference type="GO" id="GO:0002949">
    <property type="term" value="P:tRNA threonylcarbamoyladenosine modification"/>
    <property type="evidence" value="ECO:0007669"/>
    <property type="project" value="UniProtKB-UniRule"/>
</dbReference>
<dbReference type="CDD" id="cd24133">
    <property type="entry name" value="ASKHA_NBD_TsaD_bac"/>
    <property type="match status" value="1"/>
</dbReference>
<dbReference type="FunFam" id="3.30.420.40:FF:000012">
    <property type="entry name" value="tRNA N6-adenosine threonylcarbamoyltransferase"/>
    <property type="match status" value="1"/>
</dbReference>
<dbReference type="FunFam" id="3.30.420.40:FF:000040">
    <property type="entry name" value="tRNA N6-adenosine threonylcarbamoyltransferase"/>
    <property type="match status" value="1"/>
</dbReference>
<dbReference type="Gene3D" id="3.30.420.40">
    <property type="match status" value="2"/>
</dbReference>
<dbReference type="HAMAP" id="MF_01445">
    <property type="entry name" value="TsaD"/>
    <property type="match status" value="1"/>
</dbReference>
<dbReference type="InterPro" id="IPR043129">
    <property type="entry name" value="ATPase_NBD"/>
</dbReference>
<dbReference type="InterPro" id="IPR000905">
    <property type="entry name" value="Gcp-like_dom"/>
</dbReference>
<dbReference type="InterPro" id="IPR017861">
    <property type="entry name" value="KAE1/TsaD"/>
</dbReference>
<dbReference type="InterPro" id="IPR022450">
    <property type="entry name" value="TsaD"/>
</dbReference>
<dbReference type="NCBIfam" id="TIGR00329">
    <property type="entry name" value="gcp_kae1"/>
    <property type="match status" value="1"/>
</dbReference>
<dbReference type="NCBIfam" id="TIGR03723">
    <property type="entry name" value="T6A_TsaD_YgjD"/>
    <property type="match status" value="1"/>
</dbReference>
<dbReference type="PANTHER" id="PTHR11735">
    <property type="entry name" value="TRNA N6-ADENOSINE THREONYLCARBAMOYLTRANSFERASE"/>
    <property type="match status" value="1"/>
</dbReference>
<dbReference type="PANTHER" id="PTHR11735:SF6">
    <property type="entry name" value="TRNA N6-ADENOSINE THREONYLCARBAMOYLTRANSFERASE, MITOCHONDRIAL"/>
    <property type="match status" value="1"/>
</dbReference>
<dbReference type="Pfam" id="PF00814">
    <property type="entry name" value="TsaD"/>
    <property type="match status" value="1"/>
</dbReference>
<dbReference type="PRINTS" id="PR00789">
    <property type="entry name" value="OSIALOPTASE"/>
</dbReference>
<dbReference type="SUPFAM" id="SSF53067">
    <property type="entry name" value="Actin-like ATPase domain"/>
    <property type="match status" value="2"/>
</dbReference>
<gene>
    <name evidence="1" type="primary">tsaD</name>
    <name type="synonym">gcp</name>
    <name type="ordered locus">Bpet2551</name>
</gene>
<accession>A9IP11</accession>
<sequence length="348" mass="36196">MIILGFESSCDETGVAAVSTERGLLAHALHTQIAMHQEYGGVVPELASRDHIRRAVPLARQVLAEAGLGLQDVDAVAYTAGPGLAGALLVGASVAQAFAWARGLPAIPIHHLEGHLLSPLLDDPRPDFPFVALLVSGGHTQLMRVDGVGRYALLGETLDDAAGEAFDKSAKLMGLGYPGGPALSRLAASGDPRRYALPRPMLHSGDLDFSFSGLKTAVLTRVKEAERDGGLDDAARADLAAATQAAIVEVLVAKAVRALKQTGLKRLVVAGGVGANQLLRELLAQALRPLGARAYFPPLALCTDNGAMIAFAAAERVKAGLASLQAGQHAFTVRPRWDLADICAGTPA</sequence>
<name>TSAD_BORPD</name>
<protein>
    <recommendedName>
        <fullName evidence="1">tRNA N6-adenosine threonylcarbamoyltransferase</fullName>
        <ecNumber evidence="1">2.3.1.234</ecNumber>
    </recommendedName>
    <alternativeName>
        <fullName evidence="1">N6-L-threonylcarbamoyladenine synthase</fullName>
        <shortName evidence="1">t(6)A synthase</shortName>
    </alternativeName>
    <alternativeName>
        <fullName evidence="1">t(6)A37 threonylcarbamoyladenosine biosynthesis protein TsaD</fullName>
    </alternativeName>
    <alternativeName>
        <fullName evidence="1">tRNA threonylcarbamoyladenosine biosynthesis protein TsaD</fullName>
    </alternativeName>
</protein>
<keyword id="KW-0012">Acyltransferase</keyword>
<keyword id="KW-0963">Cytoplasm</keyword>
<keyword id="KW-0408">Iron</keyword>
<keyword id="KW-0479">Metal-binding</keyword>
<keyword id="KW-0808">Transferase</keyword>
<keyword id="KW-0819">tRNA processing</keyword>
<organism>
    <name type="scientific">Bordetella petrii (strain ATCC BAA-461 / DSM 12804 / CCUG 43448)</name>
    <dbReference type="NCBI Taxonomy" id="340100"/>
    <lineage>
        <taxon>Bacteria</taxon>
        <taxon>Pseudomonadati</taxon>
        <taxon>Pseudomonadota</taxon>
        <taxon>Betaproteobacteria</taxon>
        <taxon>Burkholderiales</taxon>
        <taxon>Alcaligenaceae</taxon>
        <taxon>Bordetella</taxon>
    </lineage>
</organism>
<feature type="chain" id="PRO_1000145951" description="tRNA N6-adenosine threonylcarbamoyltransferase">
    <location>
        <begin position="1"/>
        <end position="348"/>
    </location>
</feature>
<feature type="binding site" evidence="1">
    <location>
        <position position="111"/>
    </location>
    <ligand>
        <name>Fe cation</name>
        <dbReference type="ChEBI" id="CHEBI:24875"/>
    </ligand>
</feature>
<feature type="binding site" evidence="1">
    <location>
        <position position="115"/>
    </location>
    <ligand>
        <name>Fe cation</name>
        <dbReference type="ChEBI" id="CHEBI:24875"/>
    </ligand>
</feature>
<feature type="binding site" evidence="1">
    <location>
        <begin position="134"/>
        <end position="138"/>
    </location>
    <ligand>
        <name>substrate</name>
    </ligand>
</feature>
<feature type="binding site" evidence="1">
    <location>
        <position position="167"/>
    </location>
    <ligand>
        <name>substrate</name>
    </ligand>
</feature>
<feature type="binding site" evidence="1">
    <location>
        <position position="180"/>
    </location>
    <ligand>
        <name>substrate</name>
    </ligand>
</feature>
<feature type="binding site" evidence="1">
    <location>
        <position position="276"/>
    </location>
    <ligand>
        <name>substrate</name>
    </ligand>
</feature>
<feature type="binding site" evidence="1">
    <location>
        <position position="304"/>
    </location>
    <ligand>
        <name>Fe cation</name>
        <dbReference type="ChEBI" id="CHEBI:24875"/>
    </ligand>
</feature>
<proteinExistence type="inferred from homology"/>
<comment type="function">
    <text evidence="1">Required for the formation of a threonylcarbamoyl group on adenosine at position 37 (t(6)A37) in tRNAs that read codons beginning with adenine. Is involved in the transfer of the threonylcarbamoyl moiety of threonylcarbamoyl-AMP (TC-AMP) to the N6 group of A37, together with TsaE and TsaB. TsaD likely plays a direct catalytic role in this reaction.</text>
</comment>
<comment type="catalytic activity">
    <reaction evidence="1">
        <text>L-threonylcarbamoyladenylate + adenosine(37) in tRNA = N(6)-L-threonylcarbamoyladenosine(37) in tRNA + AMP + H(+)</text>
        <dbReference type="Rhea" id="RHEA:37059"/>
        <dbReference type="Rhea" id="RHEA-COMP:10162"/>
        <dbReference type="Rhea" id="RHEA-COMP:10163"/>
        <dbReference type="ChEBI" id="CHEBI:15378"/>
        <dbReference type="ChEBI" id="CHEBI:73682"/>
        <dbReference type="ChEBI" id="CHEBI:74411"/>
        <dbReference type="ChEBI" id="CHEBI:74418"/>
        <dbReference type="ChEBI" id="CHEBI:456215"/>
        <dbReference type="EC" id="2.3.1.234"/>
    </reaction>
</comment>
<comment type="cofactor">
    <cofactor evidence="1">
        <name>Fe(2+)</name>
        <dbReference type="ChEBI" id="CHEBI:29033"/>
    </cofactor>
    <text evidence="1">Binds 1 Fe(2+) ion per subunit.</text>
</comment>
<comment type="subcellular location">
    <subcellularLocation>
        <location evidence="1">Cytoplasm</location>
    </subcellularLocation>
</comment>
<comment type="similarity">
    <text evidence="1">Belongs to the KAE1 / TsaD family.</text>
</comment>